<gene>
    <name evidence="1" type="primary">rimK1</name>
    <name type="synonym">rimK-1</name>
    <name type="ordered locus">SO_0546</name>
</gene>
<feature type="chain" id="PRO_0000205482" description="Probable alpha-L-glutamate ligase 1">
    <location>
        <begin position="1"/>
        <end position="301"/>
    </location>
</feature>
<feature type="domain" description="ATP-grasp" evidence="1">
    <location>
        <begin position="104"/>
        <end position="287"/>
    </location>
</feature>
<feature type="binding site" evidence="1">
    <location>
        <position position="141"/>
    </location>
    <ligand>
        <name>ATP</name>
        <dbReference type="ChEBI" id="CHEBI:30616"/>
    </ligand>
</feature>
<feature type="binding site" evidence="1">
    <location>
        <begin position="178"/>
        <end position="179"/>
    </location>
    <ligand>
        <name>ATP</name>
        <dbReference type="ChEBI" id="CHEBI:30616"/>
    </ligand>
</feature>
<feature type="binding site" evidence="1">
    <location>
        <position position="187"/>
    </location>
    <ligand>
        <name>ATP</name>
        <dbReference type="ChEBI" id="CHEBI:30616"/>
    </ligand>
</feature>
<feature type="binding site" evidence="1">
    <location>
        <begin position="211"/>
        <end position="213"/>
    </location>
    <ligand>
        <name>ATP</name>
        <dbReference type="ChEBI" id="CHEBI:30616"/>
    </ligand>
</feature>
<feature type="binding site" evidence="1">
    <location>
        <position position="248"/>
    </location>
    <ligand>
        <name>Mg(2+)</name>
        <dbReference type="ChEBI" id="CHEBI:18420"/>
        <label>1</label>
    </ligand>
</feature>
<feature type="binding site" evidence="1">
    <location>
        <position position="248"/>
    </location>
    <ligand>
        <name>Mn(2+)</name>
        <dbReference type="ChEBI" id="CHEBI:29035"/>
        <label>1</label>
    </ligand>
</feature>
<feature type="binding site" evidence="1">
    <location>
        <position position="260"/>
    </location>
    <ligand>
        <name>Mg(2+)</name>
        <dbReference type="ChEBI" id="CHEBI:18420"/>
        <label>1</label>
    </ligand>
</feature>
<feature type="binding site" evidence="1">
    <location>
        <position position="260"/>
    </location>
    <ligand>
        <name>Mg(2+)</name>
        <dbReference type="ChEBI" id="CHEBI:18420"/>
        <label>2</label>
    </ligand>
</feature>
<feature type="binding site" evidence="1">
    <location>
        <position position="260"/>
    </location>
    <ligand>
        <name>Mn(2+)</name>
        <dbReference type="ChEBI" id="CHEBI:29035"/>
        <label>1</label>
    </ligand>
</feature>
<feature type="binding site" evidence="1">
    <location>
        <position position="260"/>
    </location>
    <ligand>
        <name>Mn(2+)</name>
        <dbReference type="ChEBI" id="CHEBI:29035"/>
        <label>2</label>
    </ligand>
</feature>
<feature type="binding site" evidence="1">
    <location>
        <position position="262"/>
    </location>
    <ligand>
        <name>Mg(2+)</name>
        <dbReference type="ChEBI" id="CHEBI:18420"/>
        <label>2</label>
    </ligand>
</feature>
<feature type="binding site" evidence="1">
    <location>
        <position position="262"/>
    </location>
    <ligand>
        <name>Mn(2+)</name>
        <dbReference type="ChEBI" id="CHEBI:29035"/>
        <label>2</label>
    </ligand>
</feature>
<organism>
    <name type="scientific">Shewanella oneidensis (strain ATCC 700550 / JCM 31522 / CIP 106686 / LMG 19005 / NCIMB 14063 / MR-1)</name>
    <dbReference type="NCBI Taxonomy" id="211586"/>
    <lineage>
        <taxon>Bacteria</taxon>
        <taxon>Pseudomonadati</taxon>
        <taxon>Pseudomonadota</taxon>
        <taxon>Gammaproteobacteria</taxon>
        <taxon>Alteromonadales</taxon>
        <taxon>Shewanellaceae</taxon>
        <taxon>Shewanella</taxon>
    </lineage>
</organism>
<reference key="1">
    <citation type="journal article" date="2002" name="Nat. Biotechnol.">
        <title>Genome sequence of the dissimilatory metal ion-reducing bacterium Shewanella oneidensis.</title>
        <authorList>
            <person name="Heidelberg J.F."/>
            <person name="Paulsen I.T."/>
            <person name="Nelson K.E."/>
            <person name="Gaidos E.J."/>
            <person name="Nelson W.C."/>
            <person name="Read T.D."/>
            <person name="Eisen J.A."/>
            <person name="Seshadri R."/>
            <person name="Ward N.L."/>
            <person name="Methe B.A."/>
            <person name="Clayton R.A."/>
            <person name="Meyer T."/>
            <person name="Tsapin A."/>
            <person name="Scott J."/>
            <person name="Beanan M.J."/>
            <person name="Brinkac L.M."/>
            <person name="Daugherty S.C."/>
            <person name="DeBoy R.T."/>
            <person name="Dodson R.J."/>
            <person name="Durkin A.S."/>
            <person name="Haft D.H."/>
            <person name="Kolonay J.F."/>
            <person name="Madupu R."/>
            <person name="Peterson J.D."/>
            <person name="Umayam L.A."/>
            <person name="White O."/>
            <person name="Wolf A.M."/>
            <person name="Vamathevan J.J."/>
            <person name="Weidman J.F."/>
            <person name="Impraim M."/>
            <person name="Lee K."/>
            <person name="Berry K.J."/>
            <person name="Lee C."/>
            <person name="Mueller J."/>
            <person name="Khouri H.M."/>
            <person name="Gill J."/>
            <person name="Utterback T.R."/>
            <person name="McDonald L.A."/>
            <person name="Feldblyum T.V."/>
            <person name="Smith H.O."/>
            <person name="Venter J.C."/>
            <person name="Nealson K.H."/>
            <person name="Fraser C.M."/>
        </authorList>
    </citation>
    <scope>NUCLEOTIDE SEQUENCE [LARGE SCALE GENOMIC DNA]</scope>
    <source>
        <strain>ATCC 700550 / JCM 31522 / CIP 106686 / LMG 19005 / NCIMB 14063 / MR-1</strain>
    </source>
</reference>
<sequence>MKIGILSQFPELYSTRRLVAACESRGHEAVVINTLNCYMNINSIKPSIHYQGQELTGFDAIIPRIHASVTFYGCAVVRQFEMMGVFAANDSISIARSRDKLRALQLLSRKGIGMPITGFANKPNDIPDLINMVGGAPLVIKLLEGTQGIGVVLAETKTAAESVIEAFLGLKANIMLQEYIKESNGSDIRCFVVGDKVVASMKRQGPEGDFRSNLHLGGCGEKVKITPKERKMAVAAVKAMGLVVAGVDILRSNRGPLILEVNSAPGIEGIEQTTGISVTEPIVEYIEKMVLAQKSNRPVIA</sequence>
<dbReference type="EC" id="6.3.2.-" evidence="1"/>
<dbReference type="EMBL" id="AE014299">
    <property type="protein sequence ID" value="AAN53627.1"/>
    <property type="molecule type" value="Genomic_DNA"/>
</dbReference>
<dbReference type="RefSeq" id="NP_716182.1">
    <property type="nucleotide sequence ID" value="NC_004347.2"/>
</dbReference>
<dbReference type="RefSeq" id="WP_011070886.1">
    <property type="nucleotide sequence ID" value="NC_004347.2"/>
</dbReference>
<dbReference type="SMR" id="Q8EJC1"/>
<dbReference type="STRING" id="211586.SO_0546"/>
<dbReference type="PaxDb" id="211586-SO_0546"/>
<dbReference type="DNASU" id="1168415"/>
<dbReference type="KEGG" id="son:SO_0546"/>
<dbReference type="PATRIC" id="fig|211586.12.peg.525"/>
<dbReference type="eggNOG" id="COG0189">
    <property type="taxonomic scope" value="Bacteria"/>
</dbReference>
<dbReference type="HOGENOM" id="CLU_054353_0_1_6"/>
<dbReference type="OrthoDB" id="3865600at2"/>
<dbReference type="PhylomeDB" id="Q8EJC1"/>
<dbReference type="BioCyc" id="SONE211586:G1GMP-517-MONOMER"/>
<dbReference type="Proteomes" id="UP000008186">
    <property type="component" value="Chromosome"/>
</dbReference>
<dbReference type="GO" id="GO:0005737">
    <property type="term" value="C:cytoplasm"/>
    <property type="evidence" value="ECO:0000318"/>
    <property type="project" value="GO_Central"/>
</dbReference>
<dbReference type="GO" id="GO:0005524">
    <property type="term" value="F:ATP binding"/>
    <property type="evidence" value="ECO:0007669"/>
    <property type="project" value="UniProtKB-UniRule"/>
</dbReference>
<dbReference type="GO" id="GO:0046872">
    <property type="term" value="F:metal ion binding"/>
    <property type="evidence" value="ECO:0007669"/>
    <property type="project" value="UniProtKB-KW"/>
</dbReference>
<dbReference type="GO" id="GO:0018169">
    <property type="term" value="F:ribosomal S6-glutamic acid ligase activity"/>
    <property type="evidence" value="ECO:0000318"/>
    <property type="project" value="GO_Central"/>
</dbReference>
<dbReference type="GO" id="GO:0036211">
    <property type="term" value="P:protein modification process"/>
    <property type="evidence" value="ECO:0007669"/>
    <property type="project" value="InterPro"/>
</dbReference>
<dbReference type="GO" id="GO:0009432">
    <property type="term" value="P:SOS response"/>
    <property type="evidence" value="ECO:0000318"/>
    <property type="project" value="GO_Central"/>
</dbReference>
<dbReference type="GO" id="GO:0006412">
    <property type="term" value="P:translation"/>
    <property type="evidence" value="ECO:0007669"/>
    <property type="project" value="UniProtKB-KW"/>
</dbReference>
<dbReference type="FunFam" id="3.30.470.20:FF:000058">
    <property type="entry name" value="Alpha-aminoadipate--LysW ligase LysX protein"/>
    <property type="match status" value="1"/>
</dbReference>
<dbReference type="FunFam" id="3.40.50.20:FF:000004">
    <property type="entry name" value="Probable alpha-L-glutamate ligase"/>
    <property type="match status" value="1"/>
</dbReference>
<dbReference type="FunFam" id="3.30.1490.20:FF:000005">
    <property type="entry name" value="Probable alpha-L-glutamate ligase 1"/>
    <property type="match status" value="1"/>
</dbReference>
<dbReference type="Gene3D" id="3.40.50.20">
    <property type="match status" value="1"/>
</dbReference>
<dbReference type="Gene3D" id="3.30.1490.20">
    <property type="entry name" value="ATP-grasp fold, A domain"/>
    <property type="match status" value="1"/>
</dbReference>
<dbReference type="Gene3D" id="3.30.470.20">
    <property type="entry name" value="ATP-grasp fold, B domain"/>
    <property type="match status" value="1"/>
</dbReference>
<dbReference type="HAMAP" id="MF_01552">
    <property type="entry name" value="RimK"/>
    <property type="match status" value="1"/>
</dbReference>
<dbReference type="InterPro" id="IPR011761">
    <property type="entry name" value="ATP-grasp"/>
</dbReference>
<dbReference type="InterPro" id="IPR013651">
    <property type="entry name" value="ATP-grasp_RimK-type"/>
</dbReference>
<dbReference type="InterPro" id="IPR013815">
    <property type="entry name" value="ATP_grasp_subdomain_1"/>
</dbReference>
<dbReference type="InterPro" id="IPR023533">
    <property type="entry name" value="RimK"/>
</dbReference>
<dbReference type="InterPro" id="IPR041107">
    <property type="entry name" value="Rimk_N"/>
</dbReference>
<dbReference type="InterPro" id="IPR004666">
    <property type="entry name" value="Rp_bS6_RimK/Lys_biosynth_LsyX"/>
</dbReference>
<dbReference type="NCBIfam" id="NF007764">
    <property type="entry name" value="PRK10446.1"/>
    <property type="match status" value="1"/>
</dbReference>
<dbReference type="NCBIfam" id="TIGR00768">
    <property type="entry name" value="rimK_fam"/>
    <property type="match status" value="1"/>
</dbReference>
<dbReference type="PANTHER" id="PTHR21621:SF7">
    <property type="entry name" value="RIBOSOMAL PROTEIN BS6--L-GLUTAMATE LIGASE"/>
    <property type="match status" value="1"/>
</dbReference>
<dbReference type="PANTHER" id="PTHR21621">
    <property type="entry name" value="RIBOSOMAL PROTEIN S6 MODIFICATION PROTEIN"/>
    <property type="match status" value="1"/>
</dbReference>
<dbReference type="Pfam" id="PF08443">
    <property type="entry name" value="RimK"/>
    <property type="match status" value="1"/>
</dbReference>
<dbReference type="Pfam" id="PF18030">
    <property type="entry name" value="Rimk_N"/>
    <property type="match status" value="1"/>
</dbReference>
<dbReference type="SUPFAM" id="SSF56059">
    <property type="entry name" value="Glutathione synthetase ATP-binding domain-like"/>
    <property type="match status" value="1"/>
</dbReference>
<dbReference type="PROSITE" id="PS50975">
    <property type="entry name" value="ATP_GRASP"/>
    <property type="match status" value="1"/>
</dbReference>
<proteinExistence type="inferred from homology"/>
<evidence type="ECO:0000255" key="1">
    <source>
        <dbReference type="HAMAP-Rule" id="MF_01552"/>
    </source>
</evidence>
<accession>Q8EJC1</accession>
<keyword id="KW-0067">ATP-binding</keyword>
<keyword id="KW-0436">Ligase</keyword>
<keyword id="KW-0460">Magnesium</keyword>
<keyword id="KW-0464">Manganese</keyword>
<keyword id="KW-0479">Metal-binding</keyword>
<keyword id="KW-0547">Nucleotide-binding</keyword>
<keyword id="KW-0648">Protein biosynthesis</keyword>
<keyword id="KW-1185">Reference proteome</keyword>
<comment type="cofactor">
    <cofactor evidence="1">
        <name>Mg(2+)</name>
        <dbReference type="ChEBI" id="CHEBI:18420"/>
    </cofactor>
    <cofactor evidence="1">
        <name>Mn(2+)</name>
        <dbReference type="ChEBI" id="CHEBI:29035"/>
    </cofactor>
    <text evidence="1">Binds 2 magnesium or manganese ions per subunit.</text>
</comment>
<comment type="similarity">
    <text evidence="1">Belongs to the RimK family.</text>
</comment>
<name>RIMK1_SHEON</name>
<protein>
    <recommendedName>
        <fullName evidence="1">Probable alpha-L-glutamate ligase 1</fullName>
        <ecNumber evidence="1">6.3.2.-</ecNumber>
    </recommendedName>
</protein>